<keyword id="KW-0010">Activator</keyword>
<keyword id="KW-0238">DNA-binding</keyword>
<keyword id="KW-1017">Isopeptide bond</keyword>
<keyword id="KW-0479">Metal-binding</keyword>
<keyword id="KW-0488">Methylation</keyword>
<keyword id="KW-0539">Nucleus</keyword>
<keyword id="KW-0581">Phagocytosis</keyword>
<keyword id="KW-0597">Phosphoprotein</keyword>
<keyword id="KW-1185">Reference proteome</keyword>
<keyword id="KW-0677">Repeat</keyword>
<keyword id="KW-0804">Transcription</keyword>
<keyword id="KW-0805">Transcription regulation</keyword>
<keyword id="KW-0832">Ubl conjugation</keyword>
<keyword id="KW-0862">Zinc</keyword>
<keyword id="KW-0863">Zinc-finger</keyword>
<feature type="chain" id="PRO_0000083405" description="Endothelial transcription factor GATA-2">
    <location>
        <begin position="1"/>
        <end position="480"/>
    </location>
</feature>
<feature type="zinc finger region" description="GATA-type 1" evidence="4">
    <location>
        <begin position="295"/>
        <end position="319"/>
    </location>
</feature>
<feature type="zinc finger region" description="GATA-type 2" evidence="4">
    <location>
        <begin position="349"/>
        <end position="373"/>
    </location>
</feature>
<feature type="region of interest" description="Disordered" evidence="5">
    <location>
        <begin position="166"/>
        <end position="208"/>
    </location>
</feature>
<feature type="region of interest" description="Disordered" evidence="5">
    <location>
        <begin position="457"/>
        <end position="480"/>
    </location>
</feature>
<feature type="compositionally biased region" description="Low complexity" evidence="5">
    <location>
        <begin position="183"/>
        <end position="201"/>
    </location>
</feature>
<feature type="modified residue" description="Phosphoserine" evidence="3">
    <location>
        <position position="73"/>
    </location>
</feature>
<feature type="modified residue" description="Asymmetric dimethylarginine" evidence="3">
    <location>
        <position position="86"/>
    </location>
</feature>
<feature type="modified residue" description="Phosphoserine" evidence="3">
    <location>
        <position position="192"/>
    </location>
</feature>
<feature type="cross-link" description="Glycyl lysine isopeptide (Lys-Gly) (interchain with G-Cter in SUMO2)" evidence="3">
    <location>
        <position position="389"/>
    </location>
</feature>
<feature type="sequence conflict" description="In Ref. 2; AAL57180." evidence="7" ref="2">
    <original>T</original>
    <variation>S</variation>
    <location>
        <position position="347"/>
    </location>
</feature>
<name>GATA2_RAT</name>
<gene>
    <name evidence="8" type="primary">Gata2</name>
</gene>
<evidence type="ECO:0000250" key="1"/>
<evidence type="ECO:0000250" key="2">
    <source>
        <dbReference type="UniProtKB" id="O09100"/>
    </source>
</evidence>
<evidence type="ECO:0000250" key="3">
    <source>
        <dbReference type="UniProtKB" id="P23769"/>
    </source>
</evidence>
<evidence type="ECO:0000255" key="4">
    <source>
        <dbReference type="PROSITE-ProRule" id="PRU00094"/>
    </source>
</evidence>
<evidence type="ECO:0000256" key="5">
    <source>
        <dbReference type="SAM" id="MobiDB-lite"/>
    </source>
</evidence>
<evidence type="ECO:0000269" key="6">
    <source>
    </source>
</evidence>
<evidence type="ECO:0000305" key="7"/>
<evidence type="ECO:0000312" key="8">
    <source>
        <dbReference type="EMBL" id="AAK51128.1"/>
    </source>
</evidence>
<evidence type="ECO:0000312" key="9">
    <source>
        <dbReference type="EMBL" id="AAL57180.1"/>
    </source>
</evidence>
<protein>
    <recommendedName>
        <fullName>Endothelial transcription factor GATA-2</fullName>
    </recommendedName>
    <alternativeName>
        <fullName>GATA-binding protein 2</fullName>
    </alternativeName>
</protein>
<reference evidence="8" key="1">
    <citation type="submission" date="2001-04" db="EMBL/GenBank/DDBJ databases">
        <authorList>
            <person name="Itoh T."/>
            <person name="Itoh A."/>
            <person name="Pleasure D."/>
        </authorList>
    </citation>
    <scope>NUCLEOTIDE SEQUENCE [MRNA]</scope>
    <source>
        <strain evidence="8">Sprague-Dawley</strain>
    </source>
</reference>
<reference evidence="7 9" key="2">
    <citation type="journal article" date="2003" name="Infect. Immun.">
        <title>Effect of transcription factor GATA-2 on phagocytic activity of alveolar macrophages from Pneumocystis carinii-infected hosts.</title>
        <authorList>
            <person name="Lasbury M.E."/>
            <person name="Tang X."/>
            <person name="Durant P.J."/>
            <person name="Lee C.-H."/>
        </authorList>
    </citation>
    <scope>NUCLEOTIDE SEQUENCE [MRNA]</scope>
    <scope>FUNCTION IN PHAGOCYTOSIS</scope>
    <source>
        <strain evidence="9">Sprague-Dawley</strain>
        <tissue evidence="6">Lung</tissue>
    </source>
</reference>
<reference key="3">
    <citation type="journal article" date="2004" name="Genome Res.">
        <title>The status, quality, and expansion of the NIH full-length cDNA project: the Mammalian Gene Collection (MGC).</title>
        <authorList>
            <consortium name="The MGC Project Team"/>
        </authorList>
    </citation>
    <scope>NUCLEOTIDE SEQUENCE [LARGE SCALE MRNA]</scope>
    <source>
        <tissue>Heart</tissue>
        <tissue>Lung</tissue>
    </source>
</reference>
<accession>Q924Y4</accession>
<accession>Q8VHY4</accession>
<sequence>MEVAPEQPRWMAHPAVLNAQHPDSHHPGLAHNYMEPAQLLPPDEVDVFFNHLDSQGNPYYANPAHARARVSYSPAHARLTGGQMCRPHLLHSPGLPWLDGGKAALSAAAAHHHSPWTVSPFSKTPLHPSAAGAPGGPLSVYPGAAGGSGGGSGSSVASLTPTAAHSGSHLFGFPPTPPKEVSPDPSTTGAASPASPSAGGSVARGEDKDGVKYQVSLSESMKMEGGSPLRPGLAPMGTQPATHHPIPTYPSYVPASAHEYGSGLFHPGGFLGGPASSFTPKQRSKARSCSEGRECVNCGATATPLWRRDGTGHYLCNACGLYHKMNGQNRPLIKPKRRLSAARRAGTCCANCQTTTTTLWRRNANGDPVCNACGLYYKLHNVNRPLTMKKEGIQTRNRKMSSKSKKSKKGAECFEELSKCMQEKSSPFSAAALAGHMAPVGHLPPFSHSGHILPTPTPIHPSSSLSFGHPHPSSMVTAMG</sequence>
<comment type="function">
    <text evidence="1 6">Transcriptional activator which regulates endothelin-1 gene expression in endothelial cells. Binds to the consensus sequence 5'-AGATAG-3' (By similarity). Plays an important role in the regulation of phagocytosis in alveolar macrophages, particularly during P.carinii infection.</text>
</comment>
<comment type="subunit">
    <text evidence="2 3">Interacts with BRD3. Interacts with AR and CCAR1 (By similarity). Interacts with MDFIC (By similarity).</text>
</comment>
<comment type="subcellular location">
    <subcellularLocation>
        <location evidence="1">Nucleus</location>
    </subcellularLocation>
</comment>
<proteinExistence type="evidence at protein level"/>
<organism>
    <name type="scientific">Rattus norvegicus</name>
    <name type="common">Rat</name>
    <dbReference type="NCBI Taxonomy" id="10116"/>
    <lineage>
        <taxon>Eukaryota</taxon>
        <taxon>Metazoa</taxon>
        <taxon>Chordata</taxon>
        <taxon>Craniata</taxon>
        <taxon>Vertebrata</taxon>
        <taxon>Euteleostomi</taxon>
        <taxon>Mammalia</taxon>
        <taxon>Eutheria</taxon>
        <taxon>Euarchontoglires</taxon>
        <taxon>Glires</taxon>
        <taxon>Rodentia</taxon>
        <taxon>Myomorpha</taxon>
        <taxon>Muroidea</taxon>
        <taxon>Muridae</taxon>
        <taxon>Murinae</taxon>
        <taxon>Rattus</taxon>
    </lineage>
</organism>
<dbReference type="EMBL" id="AY032734">
    <property type="protein sequence ID" value="AAK51128.1"/>
    <property type="molecule type" value="mRNA"/>
</dbReference>
<dbReference type="EMBL" id="AF345897">
    <property type="protein sequence ID" value="AAL57180.1"/>
    <property type="molecule type" value="mRNA"/>
</dbReference>
<dbReference type="EMBL" id="BC061745">
    <property type="protein sequence ID" value="AAH61745.1"/>
    <property type="molecule type" value="mRNA"/>
</dbReference>
<dbReference type="RefSeq" id="NP_254277.1">
    <property type="nucleotide sequence ID" value="NM_033442.1"/>
</dbReference>
<dbReference type="RefSeq" id="XP_017447968.1">
    <property type="nucleotide sequence ID" value="XM_017592479.1"/>
</dbReference>
<dbReference type="RefSeq" id="XP_017447969.1">
    <property type="nucleotide sequence ID" value="XM_017592480.3"/>
</dbReference>
<dbReference type="RefSeq" id="XP_038963019.1">
    <property type="nucleotide sequence ID" value="XM_039107091.2"/>
</dbReference>
<dbReference type="SMR" id="Q924Y4"/>
<dbReference type="BioGRID" id="247224">
    <property type="interactions" value="1"/>
</dbReference>
<dbReference type="FunCoup" id="Q924Y4">
    <property type="interactions" value="165"/>
</dbReference>
<dbReference type="STRING" id="10116.ENSRNOP00000017240"/>
<dbReference type="GlyGen" id="Q924Y4">
    <property type="glycosylation" value="3 sites"/>
</dbReference>
<dbReference type="PhosphoSitePlus" id="Q924Y4"/>
<dbReference type="PaxDb" id="10116-ENSRNOP00000017240"/>
<dbReference type="Ensembl" id="ENSRNOT00000017240.3">
    <property type="protein sequence ID" value="ENSRNOP00000017240.1"/>
    <property type="gene ID" value="ENSRNOG00000012347.3"/>
</dbReference>
<dbReference type="GeneID" id="25159"/>
<dbReference type="KEGG" id="rno:25159"/>
<dbReference type="UCSC" id="RGD:2664">
    <property type="organism name" value="rat"/>
</dbReference>
<dbReference type="AGR" id="RGD:2664"/>
<dbReference type="CTD" id="2624"/>
<dbReference type="RGD" id="2664">
    <property type="gene designation" value="Gata2"/>
</dbReference>
<dbReference type="eggNOG" id="KOG1601">
    <property type="taxonomic scope" value="Eukaryota"/>
</dbReference>
<dbReference type="GeneTree" id="ENSGT00940000156315"/>
<dbReference type="HOGENOM" id="CLU_027524_1_0_1"/>
<dbReference type="InParanoid" id="Q924Y4"/>
<dbReference type="OMA" id="SKCMHEK"/>
<dbReference type="OrthoDB" id="2162994at2759"/>
<dbReference type="PhylomeDB" id="Q924Y4"/>
<dbReference type="TreeFam" id="TF315391"/>
<dbReference type="Reactome" id="R-RNO-8939236">
    <property type="pathway name" value="RUNX1 regulates transcription of genes involved in differentiation of HSCs"/>
</dbReference>
<dbReference type="Reactome" id="R-RNO-983231">
    <property type="pathway name" value="Factors involved in megakaryocyte development and platelet production"/>
</dbReference>
<dbReference type="PRO" id="PR:Q924Y4"/>
<dbReference type="Proteomes" id="UP000002494">
    <property type="component" value="Chromosome 4"/>
</dbReference>
<dbReference type="Bgee" id="ENSRNOG00000012347">
    <property type="expression patterns" value="Expressed in lung and 18 other cell types or tissues"/>
</dbReference>
<dbReference type="ExpressionAtlas" id="Q924Y4">
    <property type="expression patterns" value="baseline and differential"/>
</dbReference>
<dbReference type="GO" id="GO:0005737">
    <property type="term" value="C:cytoplasm"/>
    <property type="evidence" value="ECO:0000266"/>
    <property type="project" value="RGD"/>
</dbReference>
<dbReference type="GO" id="GO:0005654">
    <property type="term" value="C:nucleoplasm"/>
    <property type="evidence" value="ECO:0007669"/>
    <property type="project" value="Ensembl"/>
</dbReference>
<dbReference type="GO" id="GO:0005634">
    <property type="term" value="C:nucleus"/>
    <property type="evidence" value="ECO:0000266"/>
    <property type="project" value="RGD"/>
</dbReference>
<dbReference type="GO" id="GO:0005667">
    <property type="term" value="C:transcription regulator complex"/>
    <property type="evidence" value="ECO:0000266"/>
    <property type="project" value="RGD"/>
</dbReference>
<dbReference type="GO" id="GO:0070742">
    <property type="term" value="F:C2H2 zinc finger domain binding"/>
    <property type="evidence" value="ECO:0000266"/>
    <property type="project" value="RGD"/>
</dbReference>
<dbReference type="GO" id="GO:0003682">
    <property type="term" value="F:chromatin binding"/>
    <property type="evidence" value="ECO:0000266"/>
    <property type="project" value="RGD"/>
</dbReference>
<dbReference type="GO" id="GO:0003677">
    <property type="term" value="F:DNA binding"/>
    <property type="evidence" value="ECO:0000266"/>
    <property type="project" value="RGD"/>
</dbReference>
<dbReference type="GO" id="GO:0001228">
    <property type="term" value="F:DNA-binding transcription activator activity, RNA polymerase II-specific"/>
    <property type="evidence" value="ECO:0000266"/>
    <property type="project" value="RGD"/>
</dbReference>
<dbReference type="GO" id="GO:0003700">
    <property type="term" value="F:DNA-binding transcription factor activity"/>
    <property type="evidence" value="ECO:0000266"/>
    <property type="project" value="RGD"/>
</dbReference>
<dbReference type="GO" id="GO:0000981">
    <property type="term" value="F:DNA-binding transcription factor activity, RNA polymerase II-specific"/>
    <property type="evidence" value="ECO:0000266"/>
    <property type="project" value="RGD"/>
</dbReference>
<dbReference type="GO" id="GO:0000978">
    <property type="term" value="F:RNA polymerase II cis-regulatory region sequence-specific DNA binding"/>
    <property type="evidence" value="ECO:0000266"/>
    <property type="project" value="RGD"/>
</dbReference>
<dbReference type="GO" id="GO:0061629">
    <property type="term" value="F:RNA polymerase II-specific DNA-binding transcription factor binding"/>
    <property type="evidence" value="ECO:0000266"/>
    <property type="project" value="RGD"/>
</dbReference>
<dbReference type="GO" id="GO:0043565">
    <property type="term" value="F:sequence-specific DNA binding"/>
    <property type="evidence" value="ECO:0000314"/>
    <property type="project" value="RGD"/>
</dbReference>
<dbReference type="GO" id="GO:1990837">
    <property type="term" value="F:sequence-specific double-stranded DNA binding"/>
    <property type="evidence" value="ECO:0000266"/>
    <property type="project" value="RGD"/>
</dbReference>
<dbReference type="GO" id="GO:0001223">
    <property type="term" value="F:transcription coactivator binding"/>
    <property type="evidence" value="ECO:0000266"/>
    <property type="project" value="RGD"/>
</dbReference>
<dbReference type="GO" id="GO:0001221">
    <property type="term" value="F:transcription coregulator binding"/>
    <property type="evidence" value="ECO:0000266"/>
    <property type="project" value="RGD"/>
</dbReference>
<dbReference type="GO" id="GO:0008270">
    <property type="term" value="F:zinc ion binding"/>
    <property type="evidence" value="ECO:0007669"/>
    <property type="project" value="UniProtKB-KW"/>
</dbReference>
<dbReference type="GO" id="GO:0001525">
    <property type="term" value="P:angiogenesis"/>
    <property type="evidence" value="ECO:0000266"/>
    <property type="project" value="RGD"/>
</dbReference>
<dbReference type="GO" id="GO:0050873">
    <property type="term" value="P:brown fat cell differentiation"/>
    <property type="evidence" value="ECO:0000266"/>
    <property type="project" value="RGD"/>
</dbReference>
<dbReference type="GO" id="GO:0021533">
    <property type="term" value="P:cell differentiation in hindbrain"/>
    <property type="evidence" value="ECO:0000266"/>
    <property type="project" value="RGD"/>
</dbReference>
<dbReference type="GO" id="GO:0045165">
    <property type="term" value="P:cell fate commitment"/>
    <property type="evidence" value="ECO:0000318"/>
    <property type="project" value="GO_Central"/>
</dbReference>
<dbReference type="GO" id="GO:0001709">
    <property type="term" value="P:cell fate determination"/>
    <property type="evidence" value="ECO:0000266"/>
    <property type="project" value="RGD"/>
</dbReference>
<dbReference type="GO" id="GO:0021954">
    <property type="term" value="P:central nervous system neuron development"/>
    <property type="evidence" value="ECO:0000266"/>
    <property type="project" value="RGD"/>
</dbReference>
<dbReference type="GO" id="GO:0090102">
    <property type="term" value="P:cochlea development"/>
    <property type="evidence" value="ECO:0000270"/>
    <property type="project" value="RGD"/>
</dbReference>
<dbReference type="GO" id="GO:0021902">
    <property type="term" value="P:commitment of neuronal cell to specific neuron type in forebrain"/>
    <property type="evidence" value="ECO:0000266"/>
    <property type="project" value="RGD"/>
</dbReference>
<dbReference type="GO" id="GO:0060216">
    <property type="term" value="P:definitive hemopoiesis"/>
    <property type="evidence" value="ECO:0000266"/>
    <property type="project" value="RGD"/>
</dbReference>
<dbReference type="GO" id="GO:0001892">
    <property type="term" value="P:embryonic placenta development"/>
    <property type="evidence" value="ECO:0000266"/>
    <property type="project" value="RGD"/>
</dbReference>
<dbReference type="GO" id="GO:0035854">
    <property type="term" value="P:eosinophil fate commitment"/>
    <property type="evidence" value="ECO:0000266"/>
    <property type="project" value="RGD"/>
</dbReference>
<dbReference type="GO" id="GO:0045444">
    <property type="term" value="P:fat cell differentiation"/>
    <property type="evidence" value="ECO:0000266"/>
    <property type="project" value="RGD"/>
</dbReference>
<dbReference type="GO" id="GO:0097154">
    <property type="term" value="P:GABAergic neuron differentiation"/>
    <property type="evidence" value="ECO:0000266"/>
    <property type="project" value="RGD"/>
</dbReference>
<dbReference type="GO" id="GO:0002067">
    <property type="term" value="P:glandular epithelial cell differentiation"/>
    <property type="evidence" value="ECO:0000266"/>
    <property type="project" value="RGD"/>
</dbReference>
<dbReference type="GO" id="GO:0002071">
    <property type="term" value="P:glandular epithelial cell maturation"/>
    <property type="evidence" value="ECO:0000266"/>
    <property type="project" value="RGD"/>
</dbReference>
<dbReference type="GO" id="GO:0002244">
    <property type="term" value="P:hematopoietic progenitor cell differentiation"/>
    <property type="evidence" value="ECO:0000266"/>
    <property type="project" value="RGD"/>
</dbReference>
<dbReference type="GO" id="GO:0061484">
    <property type="term" value="P:hematopoietic stem cell homeostasis"/>
    <property type="evidence" value="ECO:0000266"/>
    <property type="project" value="RGD"/>
</dbReference>
<dbReference type="GO" id="GO:0048873">
    <property type="term" value="P:homeostasis of number of cells within a tissue"/>
    <property type="evidence" value="ECO:0000266"/>
    <property type="project" value="RGD"/>
</dbReference>
<dbReference type="GO" id="GO:0042472">
    <property type="term" value="P:inner ear morphogenesis"/>
    <property type="evidence" value="ECO:0000266"/>
    <property type="project" value="RGD"/>
</dbReference>
<dbReference type="GO" id="GO:0030099">
    <property type="term" value="P:myeloid cell differentiation"/>
    <property type="evidence" value="ECO:0000266"/>
    <property type="project" value="RGD"/>
</dbReference>
<dbReference type="GO" id="GO:1903444">
    <property type="term" value="P:negative regulation of brown fat cell differentiation"/>
    <property type="evidence" value="ECO:0000266"/>
    <property type="project" value="RGD"/>
</dbReference>
<dbReference type="GO" id="GO:2000352">
    <property type="term" value="P:negative regulation of endothelial cell apoptotic process"/>
    <property type="evidence" value="ECO:0000266"/>
    <property type="project" value="RGD"/>
</dbReference>
<dbReference type="GO" id="GO:0010629">
    <property type="term" value="P:negative regulation of gene expression"/>
    <property type="evidence" value="ECO:0000266"/>
    <property type="project" value="RGD"/>
</dbReference>
<dbReference type="GO" id="GO:1901533">
    <property type="term" value="P:negative regulation of hematopoietic progenitor cell differentiation"/>
    <property type="evidence" value="ECO:0000266"/>
    <property type="project" value="RGD"/>
</dbReference>
<dbReference type="GO" id="GO:0045650">
    <property type="term" value="P:negative regulation of macrophage differentiation"/>
    <property type="evidence" value="ECO:0000266"/>
    <property type="project" value="RGD"/>
</dbReference>
<dbReference type="GO" id="GO:0045638">
    <property type="term" value="P:negative regulation of myeloid cell differentiation"/>
    <property type="evidence" value="ECO:0000266"/>
    <property type="project" value="RGD"/>
</dbReference>
<dbReference type="GO" id="GO:2000178">
    <property type="term" value="P:negative regulation of neural precursor cell proliferation"/>
    <property type="evidence" value="ECO:0000266"/>
    <property type="project" value="RGD"/>
</dbReference>
<dbReference type="GO" id="GO:0007406">
    <property type="term" value="P:negative regulation of neuroblast proliferation"/>
    <property type="evidence" value="ECO:0000266"/>
    <property type="project" value="RGD"/>
</dbReference>
<dbReference type="GO" id="GO:0045746">
    <property type="term" value="P:negative regulation of Notch signaling pathway"/>
    <property type="evidence" value="ECO:0000266"/>
    <property type="project" value="RGD"/>
</dbReference>
<dbReference type="GO" id="GO:0000122">
    <property type="term" value="P:negative regulation of transcription by RNA polymerase II"/>
    <property type="evidence" value="ECO:0000266"/>
    <property type="project" value="RGD"/>
</dbReference>
<dbReference type="GO" id="GO:0061351">
    <property type="term" value="P:neural precursor cell proliferation"/>
    <property type="evidence" value="ECO:0000266"/>
    <property type="project" value="RGD"/>
</dbReference>
<dbReference type="GO" id="GO:0007405">
    <property type="term" value="P:neuroblast proliferation"/>
    <property type="evidence" value="ECO:0000266"/>
    <property type="project" value="RGD"/>
</dbReference>
<dbReference type="GO" id="GO:0061101">
    <property type="term" value="P:neuroendocrine cell differentiation"/>
    <property type="evidence" value="ECO:0000266"/>
    <property type="project" value="RGD"/>
</dbReference>
<dbReference type="GO" id="GO:0030182">
    <property type="term" value="P:neuron differentiation"/>
    <property type="evidence" value="ECO:0000266"/>
    <property type="project" value="RGD"/>
</dbReference>
<dbReference type="GO" id="GO:0048663">
    <property type="term" value="P:neuron fate commitment"/>
    <property type="evidence" value="ECO:0000266"/>
    <property type="project" value="RGD"/>
</dbReference>
<dbReference type="GO" id="GO:0042551">
    <property type="term" value="P:neuron maturation"/>
    <property type="evidence" value="ECO:0000266"/>
    <property type="project" value="RGD"/>
</dbReference>
<dbReference type="GO" id="GO:0001764">
    <property type="term" value="P:neuron migration"/>
    <property type="evidence" value="ECO:0000315"/>
    <property type="project" value="RGD"/>
</dbReference>
<dbReference type="GO" id="GO:0006909">
    <property type="term" value="P:phagocytosis"/>
    <property type="evidence" value="ECO:0007669"/>
    <property type="project" value="UniProtKB-KW"/>
</dbReference>
<dbReference type="GO" id="GO:0021983">
    <property type="term" value="P:pituitary gland development"/>
    <property type="evidence" value="ECO:0000266"/>
    <property type="project" value="RGD"/>
</dbReference>
<dbReference type="GO" id="GO:0045766">
    <property type="term" value="P:positive regulation of angiogenesis"/>
    <property type="evidence" value="ECO:0000266"/>
    <property type="project" value="RGD"/>
</dbReference>
<dbReference type="GO" id="GO:0043536">
    <property type="term" value="P:positive regulation of blood vessel endothelial cell migration"/>
    <property type="evidence" value="ECO:0000266"/>
    <property type="project" value="RGD"/>
</dbReference>
<dbReference type="GO" id="GO:1903589">
    <property type="term" value="P:positive regulation of blood vessel endothelial cell proliferation involved in sprouting angiogenesis"/>
    <property type="evidence" value="ECO:0000266"/>
    <property type="project" value="RGD"/>
</dbReference>
<dbReference type="GO" id="GO:0090050">
    <property type="term" value="P:positive regulation of cell migration involved in sprouting angiogenesis"/>
    <property type="evidence" value="ECO:0000266"/>
    <property type="project" value="RGD"/>
</dbReference>
<dbReference type="GO" id="GO:0007204">
    <property type="term" value="P:positive regulation of cytosolic calcium ion concentration"/>
    <property type="evidence" value="ECO:0000315"/>
    <property type="project" value="RGD"/>
</dbReference>
<dbReference type="GO" id="GO:0045648">
    <property type="term" value="P:positive regulation of erythrocyte differentiation"/>
    <property type="evidence" value="ECO:0000266"/>
    <property type="project" value="RGD"/>
</dbReference>
<dbReference type="GO" id="GO:0010628">
    <property type="term" value="P:positive regulation of gene expression"/>
    <property type="evidence" value="ECO:0000266"/>
    <property type="project" value="RGD"/>
</dbReference>
<dbReference type="GO" id="GO:0043306">
    <property type="term" value="P:positive regulation of mast cell degranulation"/>
    <property type="evidence" value="ECO:0000315"/>
    <property type="project" value="RGD"/>
</dbReference>
<dbReference type="GO" id="GO:0045654">
    <property type="term" value="P:positive regulation of megakaryocyte differentiation"/>
    <property type="evidence" value="ECO:0000266"/>
    <property type="project" value="RGD"/>
</dbReference>
<dbReference type="GO" id="GO:1902895">
    <property type="term" value="P:positive regulation of miRNA transcription"/>
    <property type="evidence" value="ECO:0000266"/>
    <property type="project" value="RGD"/>
</dbReference>
<dbReference type="GO" id="GO:0045666">
    <property type="term" value="P:positive regulation of neuron differentiation"/>
    <property type="evidence" value="ECO:0000315"/>
    <property type="project" value="RGD"/>
</dbReference>
<dbReference type="GO" id="GO:0050766">
    <property type="term" value="P:positive regulation of phagocytosis"/>
    <property type="evidence" value="ECO:0000314"/>
    <property type="project" value="UniProtKB"/>
</dbReference>
<dbReference type="GO" id="GO:0060100">
    <property type="term" value="P:positive regulation of phagocytosis, engulfment"/>
    <property type="evidence" value="ECO:0000315"/>
    <property type="project" value="RGD"/>
</dbReference>
<dbReference type="GO" id="GO:0045944">
    <property type="term" value="P:positive regulation of transcription by RNA polymerase II"/>
    <property type="evidence" value="ECO:0000315"/>
    <property type="project" value="RGD"/>
</dbReference>
<dbReference type="GO" id="GO:2000977">
    <property type="term" value="P:regulation of forebrain neuron differentiation"/>
    <property type="evidence" value="ECO:0000266"/>
    <property type="project" value="RGD"/>
</dbReference>
<dbReference type="GO" id="GO:0010725">
    <property type="term" value="P:regulation of primitive erythrocyte differentiation"/>
    <property type="evidence" value="ECO:0000266"/>
    <property type="project" value="RGD"/>
</dbReference>
<dbReference type="GO" id="GO:0033993">
    <property type="term" value="P:response to lipid"/>
    <property type="evidence" value="ECO:0000270"/>
    <property type="project" value="RGD"/>
</dbReference>
<dbReference type="GO" id="GO:0060872">
    <property type="term" value="P:semicircular canal development"/>
    <property type="evidence" value="ECO:0000266"/>
    <property type="project" value="RGD"/>
</dbReference>
<dbReference type="GO" id="GO:0035019">
    <property type="term" value="P:somatic stem cell population maintenance"/>
    <property type="evidence" value="ECO:0000266"/>
    <property type="project" value="RGD"/>
</dbReference>
<dbReference type="GO" id="GO:0060129">
    <property type="term" value="P:thyroid-stimulating hormone-secreting cell differentiation"/>
    <property type="evidence" value="ECO:0000266"/>
    <property type="project" value="RGD"/>
</dbReference>
<dbReference type="GO" id="GO:0006366">
    <property type="term" value="P:transcription by RNA polymerase II"/>
    <property type="evidence" value="ECO:0000266"/>
    <property type="project" value="RGD"/>
</dbReference>
<dbReference type="GO" id="GO:0001655">
    <property type="term" value="P:urogenital system development"/>
    <property type="evidence" value="ECO:0000266"/>
    <property type="project" value="RGD"/>
</dbReference>
<dbReference type="GO" id="GO:0061042">
    <property type="term" value="P:vascular wound healing"/>
    <property type="evidence" value="ECO:0000266"/>
    <property type="project" value="RGD"/>
</dbReference>
<dbReference type="GO" id="GO:0021514">
    <property type="term" value="P:ventral spinal cord interneuron differentiation"/>
    <property type="evidence" value="ECO:0000266"/>
    <property type="project" value="RGD"/>
</dbReference>
<dbReference type="CDD" id="cd00202">
    <property type="entry name" value="ZnF_GATA"/>
    <property type="match status" value="2"/>
</dbReference>
<dbReference type="FunFam" id="3.30.50.10:FF:000001">
    <property type="entry name" value="GATA transcription factor (GATAd)"/>
    <property type="match status" value="1"/>
</dbReference>
<dbReference type="FunFam" id="3.30.50.10:FF:000032">
    <property type="entry name" value="Transcription factor GATA-3"/>
    <property type="match status" value="1"/>
</dbReference>
<dbReference type="Gene3D" id="3.30.50.10">
    <property type="entry name" value="Erythroid Transcription Factor GATA-1, subunit A"/>
    <property type="match status" value="2"/>
</dbReference>
<dbReference type="InterPro" id="IPR016374">
    <property type="entry name" value="TF_GATA-2/3"/>
</dbReference>
<dbReference type="InterPro" id="IPR039355">
    <property type="entry name" value="Transcription_factor_GATA"/>
</dbReference>
<dbReference type="InterPro" id="IPR000679">
    <property type="entry name" value="Znf_GATA"/>
</dbReference>
<dbReference type="InterPro" id="IPR013088">
    <property type="entry name" value="Znf_NHR/GATA"/>
</dbReference>
<dbReference type="PANTHER" id="PTHR10071:SF149">
    <property type="entry name" value="ENDOTHELIAL TRANSCRIPTION FACTOR GATA-2"/>
    <property type="match status" value="1"/>
</dbReference>
<dbReference type="PANTHER" id="PTHR10071">
    <property type="entry name" value="TRANSCRIPTION FACTOR GATA FAMILY MEMBER"/>
    <property type="match status" value="1"/>
</dbReference>
<dbReference type="Pfam" id="PF00320">
    <property type="entry name" value="GATA"/>
    <property type="match status" value="2"/>
</dbReference>
<dbReference type="PIRSF" id="PIRSF003027">
    <property type="entry name" value="TF_GATA-1/2/3"/>
    <property type="match status" value="1"/>
</dbReference>
<dbReference type="PRINTS" id="PR00619">
    <property type="entry name" value="GATAZNFINGER"/>
</dbReference>
<dbReference type="SMART" id="SM00401">
    <property type="entry name" value="ZnF_GATA"/>
    <property type="match status" value="2"/>
</dbReference>
<dbReference type="SUPFAM" id="SSF57716">
    <property type="entry name" value="Glucocorticoid receptor-like (DNA-binding domain)"/>
    <property type="match status" value="2"/>
</dbReference>
<dbReference type="PROSITE" id="PS00344">
    <property type="entry name" value="GATA_ZN_FINGER_1"/>
    <property type="match status" value="2"/>
</dbReference>
<dbReference type="PROSITE" id="PS50114">
    <property type="entry name" value="GATA_ZN_FINGER_2"/>
    <property type="match status" value="2"/>
</dbReference>